<name>MINE_BEII9</name>
<comment type="function">
    <text evidence="1">Prevents the cell division inhibition by proteins MinC and MinD at internal division sites while permitting inhibition at polar sites. This ensures cell division at the proper site by restricting the formation of a division septum at the midpoint of the long axis of the cell.</text>
</comment>
<comment type="similarity">
    <text evidence="1">Belongs to the MinE family.</text>
</comment>
<proteinExistence type="inferred from homology"/>
<protein>
    <recommendedName>
        <fullName evidence="1">Cell division topological specificity factor</fullName>
    </recommendedName>
</protein>
<keyword id="KW-0131">Cell cycle</keyword>
<keyword id="KW-0132">Cell division</keyword>
<keyword id="KW-1185">Reference proteome</keyword>
<accession>B2ICQ8</accession>
<evidence type="ECO:0000255" key="1">
    <source>
        <dbReference type="HAMAP-Rule" id="MF_00262"/>
    </source>
</evidence>
<organism>
    <name type="scientific">Beijerinckia indica subsp. indica (strain ATCC 9039 / DSM 1715 / NCIMB 8712)</name>
    <dbReference type="NCBI Taxonomy" id="395963"/>
    <lineage>
        <taxon>Bacteria</taxon>
        <taxon>Pseudomonadati</taxon>
        <taxon>Pseudomonadota</taxon>
        <taxon>Alphaproteobacteria</taxon>
        <taxon>Hyphomicrobiales</taxon>
        <taxon>Beijerinckiaceae</taxon>
        <taxon>Beijerinckia</taxon>
    </lineage>
</organism>
<reference key="1">
    <citation type="journal article" date="2010" name="J. Bacteriol.">
        <title>Complete genome sequence of Beijerinckia indica subsp. indica.</title>
        <authorList>
            <person name="Tamas I."/>
            <person name="Dedysh S.N."/>
            <person name="Liesack W."/>
            <person name="Stott M.B."/>
            <person name="Alam M."/>
            <person name="Murrell J.C."/>
            <person name="Dunfield P.F."/>
        </authorList>
    </citation>
    <scope>NUCLEOTIDE SEQUENCE [LARGE SCALE GENOMIC DNA]</scope>
    <source>
        <strain>ATCC 9039 / DSM 1715 / NCIMB 8712</strain>
    </source>
</reference>
<sequence length="94" mass="10410">MSLFDFFRRPTSAPVARERLQILLAHERAVIGRSDLIAILREEILAVIAKHVTMEPEKVNVKMERGDTVSTLEVEVEVPTSATARAGKKVVEAA</sequence>
<gene>
    <name evidence="1" type="primary">minE</name>
    <name type="ordered locus">Bind_1702</name>
</gene>
<dbReference type="EMBL" id="CP001016">
    <property type="protein sequence ID" value="ACB95332.1"/>
    <property type="molecule type" value="Genomic_DNA"/>
</dbReference>
<dbReference type="RefSeq" id="WP_012384689.1">
    <property type="nucleotide sequence ID" value="NC_010581.1"/>
</dbReference>
<dbReference type="SMR" id="B2ICQ8"/>
<dbReference type="STRING" id="395963.Bind_1702"/>
<dbReference type="KEGG" id="bid:Bind_1702"/>
<dbReference type="eggNOG" id="COG0851">
    <property type="taxonomic scope" value="Bacteria"/>
</dbReference>
<dbReference type="HOGENOM" id="CLU_137929_2_0_5"/>
<dbReference type="OrthoDB" id="9802655at2"/>
<dbReference type="Proteomes" id="UP000001695">
    <property type="component" value="Chromosome"/>
</dbReference>
<dbReference type="GO" id="GO:0051301">
    <property type="term" value="P:cell division"/>
    <property type="evidence" value="ECO:0007669"/>
    <property type="project" value="UniProtKB-KW"/>
</dbReference>
<dbReference type="GO" id="GO:0032955">
    <property type="term" value="P:regulation of division septum assembly"/>
    <property type="evidence" value="ECO:0007669"/>
    <property type="project" value="InterPro"/>
</dbReference>
<dbReference type="Gene3D" id="3.30.1070.10">
    <property type="entry name" value="Cell division topological specificity factor MinE"/>
    <property type="match status" value="1"/>
</dbReference>
<dbReference type="HAMAP" id="MF_00262">
    <property type="entry name" value="MinE"/>
    <property type="match status" value="1"/>
</dbReference>
<dbReference type="InterPro" id="IPR005527">
    <property type="entry name" value="MinE"/>
</dbReference>
<dbReference type="InterPro" id="IPR036707">
    <property type="entry name" value="MinE_sf"/>
</dbReference>
<dbReference type="NCBIfam" id="TIGR01215">
    <property type="entry name" value="minE"/>
    <property type="match status" value="1"/>
</dbReference>
<dbReference type="NCBIfam" id="NF001422">
    <property type="entry name" value="PRK00296.1"/>
    <property type="match status" value="1"/>
</dbReference>
<dbReference type="Pfam" id="PF03776">
    <property type="entry name" value="MinE"/>
    <property type="match status" value="1"/>
</dbReference>
<dbReference type="SUPFAM" id="SSF55229">
    <property type="entry name" value="Cell division protein MinE topological specificity domain"/>
    <property type="match status" value="1"/>
</dbReference>
<feature type="chain" id="PRO_1000114201" description="Cell division topological specificity factor">
    <location>
        <begin position="1"/>
        <end position="94"/>
    </location>
</feature>